<organism>
    <name type="scientific">Pseudomonas entomophila (strain L48)</name>
    <dbReference type="NCBI Taxonomy" id="384676"/>
    <lineage>
        <taxon>Bacteria</taxon>
        <taxon>Pseudomonadati</taxon>
        <taxon>Pseudomonadota</taxon>
        <taxon>Gammaproteobacteria</taxon>
        <taxon>Pseudomonadales</taxon>
        <taxon>Pseudomonadaceae</taxon>
        <taxon>Pseudomonas</taxon>
    </lineage>
</organism>
<reference key="1">
    <citation type="journal article" date="2006" name="Nat. Biotechnol.">
        <title>Complete genome sequence of the entomopathogenic and metabolically versatile soil bacterium Pseudomonas entomophila.</title>
        <authorList>
            <person name="Vodovar N."/>
            <person name="Vallenet D."/>
            <person name="Cruveiller S."/>
            <person name="Rouy Z."/>
            <person name="Barbe V."/>
            <person name="Acosta C."/>
            <person name="Cattolico L."/>
            <person name="Jubin C."/>
            <person name="Lajus A."/>
            <person name="Segurens B."/>
            <person name="Vacherie B."/>
            <person name="Wincker P."/>
            <person name="Weissenbach J."/>
            <person name="Lemaitre B."/>
            <person name="Medigue C."/>
            <person name="Boccard F."/>
        </authorList>
    </citation>
    <scope>NUCLEOTIDE SEQUENCE [LARGE SCALE GENOMIC DNA]</scope>
    <source>
        <strain>L48</strain>
    </source>
</reference>
<name>HIS7_PSEE4</name>
<keyword id="KW-0028">Amino-acid biosynthesis</keyword>
<keyword id="KW-0963">Cytoplasm</keyword>
<keyword id="KW-0368">Histidine biosynthesis</keyword>
<keyword id="KW-0456">Lyase</keyword>
<protein>
    <recommendedName>
        <fullName evidence="1">Imidazoleglycerol-phosphate dehydratase</fullName>
        <shortName evidence="1">IGPD</shortName>
        <ecNumber evidence="1">4.2.1.19</ecNumber>
    </recommendedName>
</protein>
<gene>
    <name evidence="1" type="primary">hisB</name>
    <name type="ordered locus">PSEEN5195</name>
</gene>
<proteinExistence type="inferred from homology"/>
<comment type="catalytic activity">
    <reaction evidence="1">
        <text>D-erythro-1-(imidazol-4-yl)glycerol 3-phosphate = 3-(imidazol-4-yl)-2-oxopropyl phosphate + H2O</text>
        <dbReference type="Rhea" id="RHEA:11040"/>
        <dbReference type="ChEBI" id="CHEBI:15377"/>
        <dbReference type="ChEBI" id="CHEBI:57766"/>
        <dbReference type="ChEBI" id="CHEBI:58278"/>
        <dbReference type="EC" id="4.2.1.19"/>
    </reaction>
</comment>
<comment type="pathway">
    <text evidence="1">Amino-acid biosynthesis; L-histidine biosynthesis; L-histidine from 5-phospho-alpha-D-ribose 1-diphosphate: step 6/9.</text>
</comment>
<comment type="subcellular location">
    <subcellularLocation>
        <location evidence="1">Cytoplasm</location>
    </subcellularLocation>
</comment>
<comment type="similarity">
    <text evidence="1">Belongs to the imidazoleglycerol-phosphate dehydratase family.</text>
</comment>
<feature type="chain" id="PRO_1000010331" description="Imidazoleglycerol-phosphate dehydratase">
    <location>
        <begin position="1"/>
        <end position="197"/>
    </location>
</feature>
<accession>Q1I3G4</accession>
<dbReference type="EC" id="4.2.1.19" evidence="1"/>
<dbReference type="EMBL" id="CT573326">
    <property type="protein sequence ID" value="CAK17822.1"/>
    <property type="molecule type" value="Genomic_DNA"/>
</dbReference>
<dbReference type="RefSeq" id="WP_011536181.1">
    <property type="nucleotide sequence ID" value="NC_008027.1"/>
</dbReference>
<dbReference type="SMR" id="Q1I3G4"/>
<dbReference type="STRING" id="384676.PSEEN5195"/>
<dbReference type="GeneID" id="32808124"/>
<dbReference type="KEGG" id="pen:PSEEN5195"/>
<dbReference type="eggNOG" id="COG0131">
    <property type="taxonomic scope" value="Bacteria"/>
</dbReference>
<dbReference type="HOGENOM" id="CLU_044308_3_0_6"/>
<dbReference type="OrthoDB" id="9790411at2"/>
<dbReference type="UniPathway" id="UPA00031">
    <property type="reaction ID" value="UER00011"/>
</dbReference>
<dbReference type="Proteomes" id="UP000000658">
    <property type="component" value="Chromosome"/>
</dbReference>
<dbReference type="GO" id="GO:0005737">
    <property type="term" value="C:cytoplasm"/>
    <property type="evidence" value="ECO:0007669"/>
    <property type="project" value="UniProtKB-SubCell"/>
</dbReference>
<dbReference type="GO" id="GO:0004424">
    <property type="term" value="F:imidazoleglycerol-phosphate dehydratase activity"/>
    <property type="evidence" value="ECO:0007669"/>
    <property type="project" value="UniProtKB-UniRule"/>
</dbReference>
<dbReference type="GO" id="GO:0000105">
    <property type="term" value="P:L-histidine biosynthetic process"/>
    <property type="evidence" value="ECO:0007669"/>
    <property type="project" value="UniProtKB-UniRule"/>
</dbReference>
<dbReference type="CDD" id="cd07914">
    <property type="entry name" value="IGPD"/>
    <property type="match status" value="1"/>
</dbReference>
<dbReference type="FunFam" id="3.30.230.40:FF:000002">
    <property type="entry name" value="Imidazoleglycerol-phosphate dehydratase"/>
    <property type="match status" value="1"/>
</dbReference>
<dbReference type="FunFam" id="3.30.230.40:FF:000003">
    <property type="entry name" value="Imidazoleglycerol-phosphate dehydratase HisB"/>
    <property type="match status" value="1"/>
</dbReference>
<dbReference type="Gene3D" id="3.30.230.40">
    <property type="entry name" value="Imidazole glycerol phosphate dehydratase, domain 1"/>
    <property type="match status" value="2"/>
</dbReference>
<dbReference type="HAMAP" id="MF_00076">
    <property type="entry name" value="HisB"/>
    <property type="match status" value="1"/>
</dbReference>
<dbReference type="InterPro" id="IPR038494">
    <property type="entry name" value="IGPD_sf"/>
</dbReference>
<dbReference type="InterPro" id="IPR000807">
    <property type="entry name" value="ImidazoleglycerolP_deHydtase"/>
</dbReference>
<dbReference type="InterPro" id="IPR020565">
    <property type="entry name" value="ImidazoleglycerP_deHydtase_CS"/>
</dbReference>
<dbReference type="InterPro" id="IPR020568">
    <property type="entry name" value="Ribosomal_Su5_D2-typ_SF"/>
</dbReference>
<dbReference type="NCBIfam" id="NF002106">
    <property type="entry name" value="PRK00951.1-1"/>
    <property type="match status" value="1"/>
</dbReference>
<dbReference type="NCBIfam" id="NF002111">
    <property type="entry name" value="PRK00951.2-1"/>
    <property type="match status" value="1"/>
</dbReference>
<dbReference type="NCBIfam" id="NF002114">
    <property type="entry name" value="PRK00951.2-4"/>
    <property type="match status" value="1"/>
</dbReference>
<dbReference type="PANTHER" id="PTHR23133:SF2">
    <property type="entry name" value="IMIDAZOLEGLYCEROL-PHOSPHATE DEHYDRATASE"/>
    <property type="match status" value="1"/>
</dbReference>
<dbReference type="PANTHER" id="PTHR23133">
    <property type="entry name" value="IMIDAZOLEGLYCEROL-PHOSPHATE DEHYDRATASE HIS7"/>
    <property type="match status" value="1"/>
</dbReference>
<dbReference type="Pfam" id="PF00475">
    <property type="entry name" value="IGPD"/>
    <property type="match status" value="1"/>
</dbReference>
<dbReference type="SUPFAM" id="SSF54211">
    <property type="entry name" value="Ribosomal protein S5 domain 2-like"/>
    <property type="match status" value="2"/>
</dbReference>
<dbReference type="PROSITE" id="PS00954">
    <property type="entry name" value="IGP_DEHYDRATASE_1"/>
    <property type="match status" value="1"/>
</dbReference>
<dbReference type="PROSITE" id="PS00955">
    <property type="entry name" value="IGP_DEHYDRATASE_2"/>
    <property type="match status" value="1"/>
</dbReference>
<sequence>MVERKASVERNTLETQVKCSINLDGSGKARFDIGVPFLEHMLDQIARHGLIDLDIECKGDLHIDDHHTVEDVGITLGQAFAQAIGDKKGIYRYGHAYVPLDEALSRVVIDFSGRPGLQMHVPYTRASVGGFDVDLFQEFFQGFVNHALVTLHIDNLRGHNTHHQIETVFKAFGRALRMAIEQDERMAGQMPSTKGCL</sequence>
<evidence type="ECO:0000255" key="1">
    <source>
        <dbReference type="HAMAP-Rule" id="MF_00076"/>
    </source>
</evidence>